<keyword id="KW-0030">Aminoacyl-tRNA synthetase</keyword>
<keyword id="KW-0067">ATP-binding</keyword>
<keyword id="KW-0963">Cytoplasm</keyword>
<keyword id="KW-0436">Ligase</keyword>
<keyword id="KW-0547">Nucleotide-binding</keyword>
<keyword id="KW-0648">Protein biosynthesis</keyword>
<protein>
    <recommendedName>
        <fullName evidence="1">Serine--tRNA ligase</fullName>
        <ecNumber evidence="1">6.1.1.11</ecNumber>
    </recommendedName>
    <alternativeName>
        <fullName evidence="1">Seryl-tRNA synthetase</fullName>
        <shortName evidence="1">SerRS</shortName>
    </alternativeName>
    <alternativeName>
        <fullName evidence="1">Seryl-tRNA(Ser/Sec) synthetase</fullName>
    </alternativeName>
</protein>
<gene>
    <name evidence="1" type="primary">serS</name>
    <name type="ordered locus">SSPA1707</name>
</gene>
<name>SYS_SALPK</name>
<sequence>MLDPNLLRNEPDAVAEKLARRGFKLDVDKLRALEERRKVLQVNTENLQAERNSRSKSIGQAKARGEDIEPLRLEVNKLGEELDAAKAELDTLLAEIRDIALTIPNLPADEVPVGKDENDNVEVSRWGTPREFDFEIRDHVTLGEMHSGLDFAAAVKLTGSRFVVMKGQIARMHRALSQFMLDLHTEQHGYSENYVPYLVNHDTLYGTGQLPKFAGDLFHTRPLEEEADSSNYALIPTAEVPLTNLVRDEIIDEDQLPIKMTAHTPCFRSEAGSYGRDTRGLIRMHQFDKVEMVQIVRPEDSMAALEEMTGHAEKVLQLLGLPYRKIILCTGDMGFGACKTYDLEVWVPAQNTYREISSCSNVWDFQARRMQARCRSKSDKKTRLVHTLNGSGLAVGRTLVAVMENYQQADGRIEVPEVLRPYMNGLEYIG</sequence>
<reference key="1">
    <citation type="journal article" date="2009" name="BMC Genomics">
        <title>Pseudogene accumulation in the evolutionary histories of Salmonella enterica serovars Paratyphi A and Typhi.</title>
        <authorList>
            <person name="Holt K.E."/>
            <person name="Thomson N.R."/>
            <person name="Wain J."/>
            <person name="Langridge G.C."/>
            <person name="Hasan R."/>
            <person name="Bhutta Z.A."/>
            <person name="Quail M.A."/>
            <person name="Norbertczak H."/>
            <person name="Walker D."/>
            <person name="Simmonds M."/>
            <person name="White B."/>
            <person name="Bason N."/>
            <person name="Mungall K."/>
            <person name="Dougan G."/>
            <person name="Parkhill J."/>
        </authorList>
    </citation>
    <scope>NUCLEOTIDE SEQUENCE [LARGE SCALE GENOMIC DNA]</scope>
    <source>
        <strain>AKU_12601</strain>
    </source>
</reference>
<accession>B5BBR2</accession>
<dbReference type="EC" id="6.1.1.11" evidence="1"/>
<dbReference type="EMBL" id="FM200053">
    <property type="protein sequence ID" value="CAR59900.1"/>
    <property type="molecule type" value="Genomic_DNA"/>
</dbReference>
<dbReference type="RefSeq" id="WP_000886697.1">
    <property type="nucleotide sequence ID" value="NC_011147.1"/>
</dbReference>
<dbReference type="SMR" id="B5BBR2"/>
<dbReference type="KEGG" id="sek:SSPA1707"/>
<dbReference type="HOGENOM" id="CLU_023797_1_1_6"/>
<dbReference type="UniPathway" id="UPA00906">
    <property type="reaction ID" value="UER00895"/>
</dbReference>
<dbReference type="Proteomes" id="UP000001869">
    <property type="component" value="Chromosome"/>
</dbReference>
<dbReference type="GO" id="GO:0005737">
    <property type="term" value="C:cytoplasm"/>
    <property type="evidence" value="ECO:0007669"/>
    <property type="project" value="UniProtKB-SubCell"/>
</dbReference>
<dbReference type="GO" id="GO:0005524">
    <property type="term" value="F:ATP binding"/>
    <property type="evidence" value="ECO:0007669"/>
    <property type="project" value="UniProtKB-UniRule"/>
</dbReference>
<dbReference type="GO" id="GO:0004828">
    <property type="term" value="F:serine-tRNA ligase activity"/>
    <property type="evidence" value="ECO:0007669"/>
    <property type="project" value="UniProtKB-UniRule"/>
</dbReference>
<dbReference type="GO" id="GO:0016260">
    <property type="term" value="P:selenocysteine biosynthetic process"/>
    <property type="evidence" value="ECO:0007669"/>
    <property type="project" value="UniProtKB-UniRule"/>
</dbReference>
<dbReference type="GO" id="GO:0006434">
    <property type="term" value="P:seryl-tRNA aminoacylation"/>
    <property type="evidence" value="ECO:0007669"/>
    <property type="project" value="UniProtKB-UniRule"/>
</dbReference>
<dbReference type="CDD" id="cd00770">
    <property type="entry name" value="SerRS_core"/>
    <property type="match status" value="1"/>
</dbReference>
<dbReference type="FunFam" id="1.10.287.40:FF:000001">
    <property type="entry name" value="Serine--tRNA ligase"/>
    <property type="match status" value="1"/>
</dbReference>
<dbReference type="FunFam" id="3.30.930.10:FF:000018">
    <property type="entry name" value="Serine--tRNA ligase"/>
    <property type="match status" value="1"/>
</dbReference>
<dbReference type="Gene3D" id="3.30.930.10">
    <property type="entry name" value="Bira Bifunctional Protein, Domain 2"/>
    <property type="match status" value="1"/>
</dbReference>
<dbReference type="Gene3D" id="1.10.287.40">
    <property type="entry name" value="Serine-tRNA synthetase, tRNA binding domain"/>
    <property type="match status" value="1"/>
</dbReference>
<dbReference type="HAMAP" id="MF_00176">
    <property type="entry name" value="Ser_tRNA_synth_type1"/>
    <property type="match status" value="1"/>
</dbReference>
<dbReference type="InterPro" id="IPR002314">
    <property type="entry name" value="aa-tRNA-synt_IIb"/>
</dbReference>
<dbReference type="InterPro" id="IPR006195">
    <property type="entry name" value="aa-tRNA-synth_II"/>
</dbReference>
<dbReference type="InterPro" id="IPR045864">
    <property type="entry name" value="aa-tRNA-synth_II/BPL/LPL"/>
</dbReference>
<dbReference type="InterPro" id="IPR002317">
    <property type="entry name" value="Ser-tRNA-ligase_type_1"/>
</dbReference>
<dbReference type="InterPro" id="IPR015866">
    <property type="entry name" value="Ser-tRNA-synth_1_N"/>
</dbReference>
<dbReference type="InterPro" id="IPR042103">
    <property type="entry name" value="SerRS_1_N_sf"/>
</dbReference>
<dbReference type="InterPro" id="IPR033729">
    <property type="entry name" value="SerRS_core"/>
</dbReference>
<dbReference type="InterPro" id="IPR010978">
    <property type="entry name" value="tRNA-bd_arm"/>
</dbReference>
<dbReference type="NCBIfam" id="TIGR00414">
    <property type="entry name" value="serS"/>
    <property type="match status" value="1"/>
</dbReference>
<dbReference type="PANTHER" id="PTHR43697:SF1">
    <property type="entry name" value="SERINE--TRNA LIGASE"/>
    <property type="match status" value="1"/>
</dbReference>
<dbReference type="PANTHER" id="PTHR43697">
    <property type="entry name" value="SERYL-TRNA SYNTHETASE"/>
    <property type="match status" value="1"/>
</dbReference>
<dbReference type="Pfam" id="PF02403">
    <property type="entry name" value="Seryl_tRNA_N"/>
    <property type="match status" value="1"/>
</dbReference>
<dbReference type="Pfam" id="PF00587">
    <property type="entry name" value="tRNA-synt_2b"/>
    <property type="match status" value="1"/>
</dbReference>
<dbReference type="PIRSF" id="PIRSF001529">
    <property type="entry name" value="Ser-tRNA-synth_IIa"/>
    <property type="match status" value="1"/>
</dbReference>
<dbReference type="PRINTS" id="PR00981">
    <property type="entry name" value="TRNASYNTHSER"/>
</dbReference>
<dbReference type="SUPFAM" id="SSF55681">
    <property type="entry name" value="Class II aaRS and biotin synthetases"/>
    <property type="match status" value="1"/>
</dbReference>
<dbReference type="SUPFAM" id="SSF46589">
    <property type="entry name" value="tRNA-binding arm"/>
    <property type="match status" value="1"/>
</dbReference>
<dbReference type="PROSITE" id="PS50862">
    <property type="entry name" value="AA_TRNA_LIGASE_II"/>
    <property type="match status" value="1"/>
</dbReference>
<feature type="chain" id="PRO_1000098122" description="Serine--tRNA ligase">
    <location>
        <begin position="1"/>
        <end position="430"/>
    </location>
</feature>
<feature type="binding site" evidence="1">
    <location>
        <begin position="237"/>
        <end position="239"/>
    </location>
    <ligand>
        <name>L-serine</name>
        <dbReference type="ChEBI" id="CHEBI:33384"/>
    </ligand>
</feature>
<feature type="binding site" evidence="1">
    <location>
        <begin position="268"/>
        <end position="270"/>
    </location>
    <ligand>
        <name>ATP</name>
        <dbReference type="ChEBI" id="CHEBI:30616"/>
    </ligand>
</feature>
<feature type="binding site" evidence="1">
    <location>
        <position position="291"/>
    </location>
    <ligand>
        <name>L-serine</name>
        <dbReference type="ChEBI" id="CHEBI:33384"/>
    </ligand>
</feature>
<feature type="binding site" evidence="1">
    <location>
        <begin position="355"/>
        <end position="358"/>
    </location>
    <ligand>
        <name>ATP</name>
        <dbReference type="ChEBI" id="CHEBI:30616"/>
    </ligand>
</feature>
<feature type="binding site" evidence="1">
    <location>
        <position position="391"/>
    </location>
    <ligand>
        <name>L-serine</name>
        <dbReference type="ChEBI" id="CHEBI:33384"/>
    </ligand>
</feature>
<organism>
    <name type="scientific">Salmonella paratyphi A (strain AKU_12601)</name>
    <dbReference type="NCBI Taxonomy" id="554290"/>
    <lineage>
        <taxon>Bacteria</taxon>
        <taxon>Pseudomonadati</taxon>
        <taxon>Pseudomonadota</taxon>
        <taxon>Gammaproteobacteria</taxon>
        <taxon>Enterobacterales</taxon>
        <taxon>Enterobacteriaceae</taxon>
        <taxon>Salmonella</taxon>
    </lineage>
</organism>
<evidence type="ECO:0000255" key="1">
    <source>
        <dbReference type="HAMAP-Rule" id="MF_00176"/>
    </source>
</evidence>
<proteinExistence type="inferred from homology"/>
<comment type="function">
    <text evidence="1">Catalyzes the attachment of serine to tRNA(Ser). Is also able to aminoacylate tRNA(Sec) with serine, to form the misacylated tRNA L-seryl-tRNA(Sec), which will be further converted into selenocysteinyl-tRNA(Sec).</text>
</comment>
<comment type="catalytic activity">
    <reaction evidence="1">
        <text>tRNA(Ser) + L-serine + ATP = L-seryl-tRNA(Ser) + AMP + diphosphate + H(+)</text>
        <dbReference type="Rhea" id="RHEA:12292"/>
        <dbReference type="Rhea" id="RHEA-COMP:9669"/>
        <dbReference type="Rhea" id="RHEA-COMP:9703"/>
        <dbReference type="ChEBI" id="CHEBI:15378"/>
        <dbReference type="ChEBI" id="CHEBI:30616"/>
        <dbReference type="ChEBI" id="CHEBI:33019"/>
        <dbReference type="ChEBI" id="CHEBI:33384"/>
        <dbReference type="ChEBI" id="CHEBI:78442"/>
        <dbReference type="ChEBI" id="CHEBI:78533"/>
        <dbReference type="ChEBI" id="CHEBI:456215"/>
        <dbReference type="EC" id="6.1.1.11"/>
    </reaction>
</comment>
<comment type="catalytic activity">
    <reaction evidence="1">
        <text>tRNA(Sec) + L-serine + ATP = L-seryl-tRNA(Sec) + AMP + diphosphate + H(+)</text>
        <dbReference type="Rhea" id="RHEA:42580"/>
        <dbReference type="Rhea" id="RHEA-COMP:9742"/>
        <dbReference type="Rhea" id="RHEA-COMP:10128"/>
        <dbReference type="ChEBI" id="CHEBI:15378"/>
        <dbReference type="ChEBI" id="CHEBI:30616"/>
        <dbReference type="ChEBI" id="CHEBI:33019"/>
        <dbReference type="ChEBI" id="CHEBI:33384"/>
        <dbReference type="ChEBI" id="CHEBI:78442"/>
        <dbReference type="ChEBI" id="CHEBI:78533"/>
        <dbReference type="ChEBI" id="CHEBI:456215"/>
        <dbReference type="EC" id="6.1.1.11"/>
    </reaction>
</comment>
<comment type="pathway">
    <text evidence="1">Aminoacyl-tRNA biosynthesis; selenocysteinyl-tRNA(Sec) biosynthesis; L-seryl-tRNA(Sec) from L-serine and tRNA(Sec): step 1/1.</text>
</comment>
<comment type="subunit">
    <text evidence="1">Homodimer. The tRNA molecule binds across the dimer.</text>
</comment>
<comment type="subcellular location">
    <subcellularLocation>
        <location evidence="1">Cytoplasm</location>
    </subcellularLocation>
</comment>
<comment type="domain">
    <text evidence="1">Consists of two distinct domains, a catalytic core and a N-terminal extension that is involved in tRNA binding.</text>
</comment>
<comment type="similarity">
    <text evidence="1">Belongs to the class-II aminoacyl-tRNA synthetase family. Type-1 seryl-tRNA synthetase subfamily.</text>
</comment>